<organism>
    <name type="scientific">Helianthus annuus</name>
    <name type="common">Common sunflower</name>
    <dbReference type="NCBI Taxonomy" id="4232"/>
    <lineage>
        <taxon>Eukaryota</taxon>
        <taxon>Viridiplantae</taxon>
        <taxon>Streptophyta</taxon>
        <taxon>Embryophyta</taxon>
        <taxon>Tracheophyta</taxon>
        <taxon>Spermatophyta</taxon>
        <taxon>Magnoliopsida</taxon>
        <taxon>eudicotyledons</taxon>
        <taxon>Gunneridae</taxon>
        <taxon>Pentapetalae</taxon>
        <taxon>asterids</taxon>
        <taxon>campanulids</taxon>
        <taxon>Asterales</taxon>
        <taxon>Asteraceae</taxon>
        <taxon>Asteroideae</taxon>
        <taxon>Heliantheae alliance</taxon>
        <taxon>Heliantheae</taxon>
        <taxon>Helianthus</taxon>
    </lineage>
</organism>
<keyword id="KW-0560">Oxidoreductase</keyword>
<keyword id="KW-0575">Peroxidase</keyword>
<name>GPX1_HELAN</name>
<proteinExistence type="evidence at transcript level"/>
<evidence type="ECO:0000250" key="1"/>
<evidence type="ECO:0000305" key="2"/>
<feature type="chain" id="PRO_0000066629" description="Glutathione peroxidase 1">
    <location>
        <begin position="1"/>
        <end position="167"/>
    </location>
</feature>
<feature type="active site" evidence="1">
    <location>
        <position position="41"/>
    </location>
</feature>
<protein>
    <recommendedName>
        <fullName>Glutathione peroxidase 1</fullName>
        <ecNumber>1.11.1.9</ecNumber>
    </recommendedName>
</protein>
<comment type="function">
    <text evidence="1">May constitute a glutathione peroxidase-like protective system against oxidative stresses.</text>
</comment>
<comment type="catalytic activity">
    <reaction>
        <text>2 glutathione + H2O2 = glutathione disulfide + 2 H2O</text>
        <dbReference type="Rhea" id="RHEA:16833"/>
        <dbReference type="ChEBI" id="CHEBI:15377"/>
        <dbReference type="ChEBI" id="CHEBI:16240"/>
        <dbReference type="ChEBI" id="CHEBI:57925"/>
        <dbReference type="ChEBI" id="CHEBI:58297"/>
        <dbReference type="EC" id="1.11.1.9"/>
    </reaction>
</comment>
<comment type="similarity">
    <text evidence="2">Belongs to the glutathione peroxidase family.</text>
</comment>
<dbReference type="EC" id="1.11.1.9"/>
<dbReference type="EMBL" id="Y14429">
    <property type="protein sequence ID" value="CAA74775.1"/>
    <property type="molecule type" value="mRNA"/>
</dbReference>
<dbReference type="PIR" id="T14262">
    <property type="entry name" value="T14262"/>
</dbReference>
<dbReference type="SMR" id="O23970"/>
<dbReference type="PeroxiBase" id="2652">
    <property type="entry name" value="HaGPx07"/>
</dbReference>
<dbReference type="GO" id="GO:0004602">
    <property type="term" value="F:glutathione peroxidase activity"/>
    <property type="evidence" value="ECO:0007669"/>
    <property type="project" value="UniProtKB-EC"/>
</dbReference>
<dbReference type="GO" id="GO:0006979">
    <property type="term" value="P:response to oxidative stress"/>
    <property type="evidence" value="ECO:0007669"/>
    <property type="project" value="InterPro"/>
</dbReference>
<dbReference type="CDD" id="cd00340">
    <property type="entry name" value="GSH_Peroxidase"/>
    <property type="match status" value="1"/>
</dbReference>
<dbReference type="FunFam" id="3.40.30.10:FF:000025">
    <property type="entry name" value="Glutathione peroxidase"/>
    <property type="match status" value="1"/>
</dbReference>
<dbReference type="Gene3D" id="3.40.30.10">
    <property type="entry name" value="Glutaredoxin"/>
    <property type="match status" value="1"/>
</dbReference>
<dbReference type="InterPro" id="IPR000889">
    <property type="entry name" value="Glutathione_peroxidase"/>
</dbReference>
<dbReference type="InterPro" id="IPR029759">
    <property type="entry name" value="GPX_AS"/>
</dbReference>
<dbReference type="InterPro" id="IPR029760">
    <property type="entry name" value="GPX_CS"/>
</dbReference>
<dbReference type="InterPro" id="IPR036249">
    <property type="entry name" value="Thioredoxin-like_sf"/>
</dbReference>
<dbReference type="InterPro" id="IPR013766">
    <property type="entry name" value="Thioredoxin_domain"/>
</dbReference>
<dbReference type="PANTHER" id="PTHR11592">
    <property type="entry name" value="GLUTATHIONE PEROXIDASE"/>
    <property type="match status" value="1"/>
</dbReference>
<dbReference type="PANTHER" id="PTHR11592:SF114">
    <property type="entry name" value="GLUTATHIONE PEROXIDASE"/>
    <property type="match status" value="1"/>
</dbReference>
<dbReference type="Pfam" id="PF00255">
    <property type="entry name" value="GSHPx"/>
    <property type="match status" value="1"/>
</dbReference>
<dbReference type="PIRSF" id="PIRSF000303">
    <property type="entry name" value="Glutathion_perox"/>
    <property type="match status" value="1"/>
</dbReference>
<dbReference type="PRINTS" id="PR01011">
    <property type="entry name" value="GLUTPROXDASE"/>
</dbReference>
<dbReference type="SUPFAM" id="SSF52833">
    <property type="entry name" value="Thioredoxin-like"/>
    <property type="match status" value="1"/>
</dbReference>
<dbReference type="PROSITE" id="PS00460">
    <property type="entry name" value="GLUTATHIONE_PEROXID_1"/>
    <property type="match status" value="1"/>
</dbReference>
<dbReference type="PROSITE" id="PS00763">
    <property type="entry name" value="GLUTATHIONE_PEROXID_2"/>
    <property type="match status" value="1"/>
</dbReference>
<dbReference type="PROSITE" id="PS51355">
    <property type="entry name" value="GLUTATHIONE_PEROXID_3"/>
    <property type="match status" value="1"/>
</dbReference>
<sequence length="167" mass="18842">MATQSKKTLYDFTVKDAKGNDVDLSVYKGKVVLIVNVASKCGLTNNSYDELNQIYLKYKEKGFEILAFPCNQFGQQEPGTNEEIVDFVCTKFKSEFPIFDKIDVNGENAAPVYEFLKTGFYGILGGDIQWNFSKFLVDKNGQPVDCYYPTTSPLTVERDIQKLLGLL</sequence>
<accession>O23970</accession>
<gene>
    <name type="primary">GPXHA-1</name>
</gene>
<reference key="1">
    <citation type="submission" date="1997-08" db="EMBL/GenBank/DDBJ databases">
        <authorList>
            <person name="Drevet J.R."/>
            <person name="Gagne G."/>
            <person name="Tourvieille de Labrouhe D."/>
            <person name="Nicolas P."/>
            <person name="Dufaure J.-P."/>
            <person name="Ledoigt G."/>
            <person name="Roeckel-Drevet P."/>
        </authorList>
    </citation>
    <scope>NUCLEOTIDE SEQUENCE [MRNA]</scope>
</reference>